<gene>
    <name evidence="6" type="primary">IGMT4</name>
    <name evidence="7" type="ordered locus">At1g21130</name>
    <name evidence="8" type="ORF">T22I11.4</name>
</gene>
<dbReference type="EC" id="2.1.1.-" evidence="6"/>
<dbReference type="EMBL" id="AC012190">
    <property type="protein sequence ID" value="AAF80648.1"/>
    <property type="molecule type" value="Genomic_DNA"/>
</dbReference>
<dbReference type="EMBL" id="CP002684">
    <property type="protein sequence ID" value="AEE30067.1"/>
    <property type="molecule type" value="Genomic_DNA"/>
</dbReference>
<dbReference type="EMBL" id="CP002684">
    <property type="protein sequence ID" value="AEE30068.1"/>
    <property type="molecule type" value="Genomic_DNA"/>
</dbReference>
<dbReference type="EMBL" id="AK227119">
    <property type="protein sequence ID" value="BAE99169.1"/>
    <property type="molecule type" value="mRNA"/>
</dbReference>
<dbReference type="EMBL" id="BT030091">
    <property type="protein sequence ID" value="ABN04829.1"/>
    <property type="molecule type" value="mRNA"/>
</dbReference>
<dbReference type="EMBL" id="AY084260">
    <property type="protein sequence ID" value="AAM67269.1"/>
    <property type="molecule type" value="mRNA"/>
</dbReference>
<dbReference type="PIR" id="E86344">
    <property type="entry name" value="E86344"/>
</dbReference>
<dbReference type="RefSeq" id="NP_173537.1">
    <molecule id="Q9LPU8-1"/>
    <property type="nucleotide sequence ID" value="NM_101967.4"/>
</dbReference>
<dbReference type="RefSeq" id="NP_849693.1">
    <molecule id="Q9LPU8-2"/>
    <property type="nucleotide sequence ID" value="NM_179362.1"/>
</dbReference>
<dbReference type="SMR" id="Q9LPU8"/>
<dbReference type="FunCoup" id="Q9LPU8">
    <property type="interactions" value="376"/>
</dbReference>
<dbReference type="IntAct" id="Q9LPU8">
    <property type="interactions" value="1"/>
</dbReference>
<dbReference type="STRING" id="3702.Q9LPU8"/>
<dbReference type="PaxDb" id="3702-AT1G21130.1"/>
<dbReference type="ProteomicsDB" id="232280">
    <molecule id="Q9LPU8-1"/>
</dbReference>
<dbReference type="EnsemblPlants" id="AT1G21130.1">
    <molecule id="Q9LPU8-1"/>
    <property type="protein sequence ID" value="AT1G21130.1"/>
    <property type="gene ID" value="AT1G21130"/>
</dbReference>
<dbReference type="EnsemblPlants" id="AT1G21130.2">
    <molecule id="Q9LPU8-2"/>
    <property type="protein sequence ID" value="AT1G21130.2"/>
    <property type="gene ID" value="AT1G21130"/>
</dbReference>
<dbReference type="GeneID" id="838709"/>
<dbReference type="Gramene" id="AT1G21130.1">
    <molecule id="Q9LPU8-1"/>
    <property type="protein sequence ID" value="AT1G21130.1"/>
    <property type="gene ID" value="AT1G21130"/>
</dbReference>
<dbReference type="Gramene" id="AT1G21130.2">
    <molecule id="Q9LPU8-2"/>
    <property type="protein sequence ID" value="AT1G21130.2"/>
    <property type="gene ID" value="AT1G21130"/>
</dbReference>
<dbReference type="KEGG" id="ath:AT1G21130"/>
<dbReference type="Araport" id="AT1G21130"/>
<dbReference type="TAIR" id="AT1G21130">
    <property type="gene designation" value="IGMT4"/>
</dbReference>
<dbReference type="eggNOG" id="KOG3178">
    <property type="taxonomic scope" value="Eukaryota"/>
</dbReference>
<dbReference type="HOGENOM" id="CLU_005533_12_1_1"/>
<dbReference type="InParanoid" id="Q9LPU8"/>
<dbReference type="OMA" id="HEAMANH"/>
<dbReference type="PhylomeDB" id="Q9LPU8"/>
<dbReference type="BioCyc" id="ARA:AT1G21130-MONOMER"/>
<dbReference type="PRO" id="PR:Q9LPU8"/>
<dbReference type="Proteomes" id="UP000006548">
    <property type="component" value="Chromosome 1"/>
</dbReference>
<dbReference type="ExpressionAtlas" id="Q9LPU8">
    <property type="expression patterns" value="baseline and differential"/>
</dbReference>
<dbReference type="GO" id="GO:0008171">
    <property type="term" value="F:O-methyltransferase activity"/>
    <property type="evidence" value="ECO:0007669"/>
    <property type="project" value="InterPro"/>
</dbReference>
<dbReference type="GO" id="GO:0046983">
    <property type="term" value="F:protein dimerization activity"/>
    <property type="evidence" value="ECO:0007669"/>
    <property type="project" value="InterPro"/>
</dbReference>
<dbReference type="GO" id="GO:0032259">
    <property type="term" value="P:methylation"/>
    <property type="evidence" value="ECO:0007669"/>
    <property type="project" value="UniProtKB-KW"/>
</dbReference>
<dbReference type="FunFam" id="1.10.10.10:FF:000357">
    <property type="entry name" value="Caffeic acid 3-O-methyltransferase"/>
    <property type="match status" value="1"/>
</dbReference>
<dbReference type="FunFam" id="3.40.50.150:FF:000061">
    <property type="entry name" value="Caffeic acid O-methyltransferase"/>
    <property type="match status" value="1"/>
</dbReference>
<dbReference type="Gene3D" id="3.40.50.150">
    <property type="entry name" value="Vaccinia Virus protein VP39"/>
    <property type="match status" value="1"/>
</dbReference>
<dbReference type="Gene3D" id="1.10.10.10">
    <property type="entry name" value="Winged helix-like DNA-binding domain superfamily/Winged helix DNA-binding domain"/>
    <property type="match status" value="1"/>
</dbReference>
<dbReference type="InterPro" id="IPR016461">
    <property type="entry name" value="COMT-like"/>
</dbReference>
<dbReference type="InterPro" id="IPR001077">
    <property type="entry name" value="O_MeTrfase_dom"/>
</dbReference>
<dbReference type="InterPro" id="IPR012967">
    <property type="entry name" value="Plant_O-MeTrfase_dimerisation"/>
</dbReference>
<dbReference type="InterPro" id="IPR029063">
    <property type="entry name" value="SAM-dependent_MTases_sf"/>
</dbReference>
<dbReference type="InterPro" id="IPR036388">
    <property type="entry name" value="WH-like_DNA-bd_sf"/>
</dbReference>
<dbReference type="InterPro" id="IPR036390">
    <property type="entry name" value="WH_DNA-bd_sf"/>
</dbReference>
<dbReference type="PANTHER" id="PTHR11746">
    <property type="entry name" value="O-METHYLTRANSFERASE"/>
    <property type="match status" value="1"/>
</dbReference>
<dbReference type="Pfam" id="PF08100">
    <property type="entry name" value="Dimerisation"/>
    <property type="match status" value="1"/>
</dbReference>
<dbReference type="Pfam" id="PF00891">
    <property type="entry name" value="Methyltransf_2"/>
    <property type="match status" value="1"/>
</dbReference>
<dbReference type="PIRSF" id="PIRSF005739">
    <property type="entry name" value="O-mtase"/>
    <property type="match status" value="1"/>
</dbReference>
<dbReference type="SUPFAM" id="SSF53335">
    <property type="entry name" value="S-adenosyl-L-methionine-dependent methyltransferases"/>
    <property type="match status" value="1"/>
</dbReference>
<dbReference type="SUPFAM" id="SSF46785">
    <property type="entry name" value="Winged helix' DNA-binding domain"/>
    <property type="match status" value="1"/>
</dbReference>
<dbReference type="PROSITE" id="PS51683">
    <property type="entry name" value="SAM_OMT_II"/>
    <property type="match status" value="1"/>
</dbReference>
<accession>Q9LPU8</accession>
<accession>A2RVV0</accession>
<accession>Q0WUM9</accession>
<accession>Q8LGI0</accession>
<protein>
    <recommendedName>
        <fullName evidence="6">Indole glucosinolate O-methyltransferase 4</fullName>
        <ecNumber evidence="6">2.1.1.-</ecNumber>
    </recommendedName>
</protein>
<name>IGMT4_ARATH</name>
<evidence type="ECO:0000250" key="1">
    <source>
        <dbReference type="UniProtKB" id="P28002"/>
    </source>
</evidence>
<evidence type="ECO:0000250" key="2">
    <source>
        <dbReference type="UniProtKB" id="Q9LPU5"/>
    </source>
</evidence>
<evidence type="ECO:0000255" key="3">
    <source>
        <dbReference type="PROSITE-ProRule" id="PRU01020"/>
    </source>
</evidence>
<evidence type="ECO:0000269" key="4">
    <source>
    </source>
</evidence>
<evidence type="ECO:0000269" key="5">
    <source>
    </source>
</evidence>
<evidence type="ECO:0000305" key="6"/>
<evidence type="ECO:0000312" key="7">
    <source>
        <dbReference type="Araport" id="AT1G21130"/>
    </source>
</evidence>
<evidence type="ECO:0000312" key="8">
    <source>
        <dbReference type="EMBL" id="AAF80648.1"/>
    </source>
</evidence>
<sequence>MGYLLEETLSSNSKTPIVIDDDNELGLMAVRLANAAAFPMVLKAALELGVFDTLYAEASRSDSFLSPSEIASKLPTTPRNPEAPVLLDRMLRLLASYSVVKCGKVSEGKGERVYRAEPICRFFLKDNIQDIGSLASQVIVNFDSVFLNTWAQLKDVVLEGGDAFGRAHGGMKLFDYMGTDERFSKLFNQTGFTIAVVKKALEVYQGFKGVNVLVDVGGGVGNTLGVVASKYPNIKGINFDLTCALAQAPSYPGVEHVAGDMFVDVPTGDAMILKRILHDWTDEDCVKILKNCWKSLPESGKVVVIELVTPDEAENGDINANIAFDMDMLMFTQCSGGKERSRAEFEALAAASGFTHCKFVCQAYHCWIIEFCK</sequence>
<reference key="1">
    <citation type="journal article" date="2000" name="Nature">
        <title>Sequence and analysis of chromosome 1 of the plant Arabidopsis thaliana.</title>
        <authorList>
            <person name="Theologis A."/>
            <person name="Ecker J.R."/>
            <person name="Palm C.J."/>
            <person name="Federspiel N.A."/>
            <person name="Kaul S."/>
            <person name="White O."/>
            <person name="Alonso J."/>
            <person name="Altafi H."/>
            <person name="Araujo R."/>
            <person name="Bowman C.L."/>
            <person name="Brooks S.Y."/>
            <person name="Buehler E."/>
            <person name="Chan A."/>
            <person name="Chao Q."/>
            <person name="Chen H."/>
            <person name="Cheuk R.F."/>
            <person name="Chin C.W."/>
            <person name="Chung M.K."/>
            <person name="Conn L."/>
            <person name="Conway A.B."/>
            <person name="Conway A.R."/>
            <person name="Creasy T.H."/>
            <person name="Dewar K."/>
            <person name="Dunn P."/>
            <person name="Etgu P."/>
            <person name="Feldblyum T.V."/>
            <person name="Feng J.-D."/>
            <person name="Fong B."/>
            <person name="Fujii C.Y."/>
            <person name="Gill J.E."/>
            <person name="Goldsmith A.D."/>
            <person name="Haas B."/>
            <person name="Hansen N.F."/>
            <person name="Hughes B."/>
            <person name="Huizar L."/>
            <person name="Hunter J.L."/>
            <person name="Jenkins J."/>
            <person name="Johnson-Hopson C."/>
            <person name="Khan S."/>
            <person name="Khaykin E."/>
            <person name="Kim C.J."/>
            <person name="Koo H.L."/>
            <person name="Kremenetskaia I."/>
            <person name="Kurtz D.B."/>
            <person name="Kwan A."/>
            <person name="Lam B."/>
            <person name="Langin-Hooper S."/>
            <person name="Lee A."/>
            <person name="Lee J.M."/>
            <person name="Lenz C.A."/>
            <person name="Li J.H."/>
            <person name="Li Y.-P."/>
            <person name="Lin X."/>
            <person name="Liu S.X."/>
            <person name="Liu Z.A."/>
            <person name="Luros J.S."/>
            <person name="Maiti R."/>
            <person name="Marziali A."/>
            <person name="Militscher J."/>
            <person name="Miranda M."/>
            <person name="Nguyen M."/>
            <person name="Nierman W.C."/>
            <person name="Osborne B.I."/>
            <person name="Pai G."/>
            <person name="Peterson J."/>
            <person name="Pham P.K."/>
            <person name="Rizzo M."/>
            <person name="Rooney T."/>
            <person name="Rowley D."/>
            <person name="Sakano H."/>
            <person name="Salzberg S.L."/>
            <person name="Schwartz J.R."/>
            <person name="Shinn P."/>
            <person name="Southwick A.M."/>
            <person name="Sun H."/>
            <person name="Tallon L.J."/>
            <person name="Tambunga G."/>
            <person name="Toriumi M.J."/>
            <person name="Town C.D."/>
            <person name="Utterback T."/>
            <person name="Van Aken S."/>
            <person name="Vaysberg M."/>
            <person name="Vysotskaia V.S."/>
            <person name="Walker M."/>
            <person name="Wu D."/>
            <person name="Yu G."/>
            <person name="Fraser C.M."/>
            <person name="Venter J.C."/>
            <person name="Davis R.W."/>
        </authorList>
    </citation>
    <scope>NUCLEOTIDE SEQUENCE [LARGE SCALE GENOMIC DNA]</scope>
    <source>
        <strain>cv. Columbia</strain>
    </source>
</reference>
<reference key="2">
    <citation type="journal article" date="2017" name="Plant J.">
        <title>Araport11: a complete reannotation of the Arabidopsis thaliana reference genome.</title>
        <authorList>
            <person name="Cheng C.Y."/>
            <person name="Krishnakumar V."/>
            <person name="Chan A.P."/>
            <person name="Thibaud-Nissen F."/>
            <person name="Schobel S."/>
            <person name="Town C.D."/>
        </authorList>
    </citation>
    <scope>GENOME REANNOTATION</scope>
    <source>
        <strain>cv. Columbia</strain>
    </source>
</reference>
<reference key="3">
    <citation type="submission" date="2006-07" db="EMBL/GenBank/DDBJ databases">
        <title>Large-scale analysis of RIKEN Arabidopsis full-length (RAFL) cDNAs.</title>
        <authorList>
            <person name="Totoki Y."/>
            <person name="Seki M."/>
            <person name="Ishida J."/>
            <person name="Nakajima M."/>
            <person name="Enju A."/>
            <person name="Kamiya A."/>
            <person name="Narusaka M."/>
            <person name="Shin-i T."/>
            <person name="Nakagawa M."/>
            <person name="Sakamoto N."/>
            <person name="Oishi K."/>
            <person name="Kohara Y."/>
            <person name="Kobayashi M."/>
            <person name="Toyoda A."/>
            <person name="Sakaki Y."/>
            <person name="Sakurai T."/>
            <person name="Iida K."/>
            <person name="Akiyama K."/>
            <person name="Satou M."/>
            <person name="Toyoda T."/>
            <person name="Konagaya A."/>
            <person name="Carninci P."/>
            <person name="Kawai J."/>
            <person name="Hayashizaki Y."/>
            <person name="Shinozaki K."/>
        </authorList>
    </citation>
    <scope>NUCLEOTIDE SEQUENCE [LARGE SCALE MRNA] (ISOFORM 1)</scope>
    <source>
        <strain>cv. Columbia</strain>
    </source>
</reference>
<reference key="4">
    <citation type="submission" date="2007-01" db="EMBL/GenBank/DDBJ databases">
        <title>Arabidopsis ORF clones.</title>
        <authorList>
            <person name="Kim C.J."/>
            <person name="Bautista V.R."/>
            <person name="Chen H."/>
            <person name="De Los Reyes C."/>
            <person name="Wu S.Y."/>
            <person name="Ecker J.R."/>
        </authorList>
    </citation>
    <scope>NUCLEOTIDE SEQUENCE [LARGE SCALE MRNA] (ISOFORM 2)</scope>
    <source>
        <strain>cv. Columbia</strain>
    </source>
</reference>
<reference key="5">
    <citation type="submission" date="2002-03" db="EMBL/GenBank/DDBJ databases">
        <title>Full-length cDNA from Arabidopsis thaliana.</title>
        <authorList>
            <person name="Brover V.V."/>
            <person name="Troukhan M.E."/>
            <person name="Alexandrov N.A."/>
            <person name="Lu Y.-P."/>
            <person name="Flavell R.B."/>
            <person name="Feldmann K.A."/>
        </authorList>
    </citation>
    <scope>NUCLEOTIDE SEQUENCE [LARGE SCALE MRNA] (ISOFORM 1)</scope>
</reference>
<reference key="6">
    <citation type="journal article" date="2005" name="Mol. Plant Microbe Interact.">
        <title>Signal signature and transcriptome changes of Arabidopsis during pathogen and insect attack.</title>
        <authorList>
            <person name="De Vos M."/>
            <person name="Van Oosten V.R."/>
            <person name="Van Poecke R.M."/>
            <person name="Van Pelt J.A."/>
            <person name="Pozo M.J."/>
            <person name="Mueller M.J."/>
            <person name="Buchala A.J."/>
            <person name="Metraux J.P."/>
            <person name="Van Loon L.C."/>
            <person name="Dicke M."/>
            <person name="Pieterse C.M."/>
        </authorList>
    </citation>
    <scope>INDUCTION BY APHID</scope>
</reference>
<reference key="7">
    <citation type="journal article" date="2017" name="Plant J.">
        <title>PP2A-B'gamma modulates foliar trans-methylation capacity and the formation of 4-methoxy-indol-3-yl-methyl glucosinolate in Arabidopsis leaves.</title>
        <authorList>
            <person name="Rahikainen M."/>
            <person name="Trotta A."/>
            <person name="Alegre S."/>
            <person name="Pascual J."/>
            <person name="Vuorinen K."/>
            <person name="Overmyer K."/>
            <person name="Moffatt B."/>
            <person name="Ravanel S."/>
            <person name="Glawischnig E."/>
            <person name="Kangasjaervi S."/>
        </authorList>
    </citation>
    <scope>INTERACTION WITH B'GAMMA</scope>
</reference>
<comment type="function">
    <text evidence="2">Involved in indole glucosinolate biosynthesis. Catalyzes methoxylation reactions of the glucosinolate indole ring. Converts the hydroxy intermediates 4-hydroxy-indol-3-yl-methylglucosinolate (4OH-I3M) and 1-hydroxy-indol-3-yl-methylglucosinolate (1OH-I3M) to 4-methoxy-indol-3-yl-methylglucosinolate (4MO-I3M) and 1-methoxy-indol-3-yl-methylglucosinolate(1MO-I3M), respectively.</text>
</comment>
<comment type="pathway">
    <text evidence="6">Secondary metabolite biosynthesis.</text>
</comment>
<comment type="subunit">
    <text evidence="5">Interacts with B'GAMMA.</text>
</comment>
<comment type="alternative products">
    <event type="alternative splicing"/>
    <isoform>
        <id>Q9LPU8-1</id>
        <name>1</name>
        <sequence type="displayed"/>
    </isoform>
    <isoform>
        <id>Q9LPU8-2</id>
        <name>2</name>
        <sequence type="described" ref="VSP_058103 VSP_058104"/>
    </isoform>
</comment>
<comment type="induction">
    <text evidence="4">By the green peach aphid Myzus persicae.</text>
</comment>
<comment type="similarity">
    <text evidence="3">Belongs to the class I-like SAM-binding methyltransferase superfamily. Cation-independent O-methyltransferase family.</text>
</comment>
<proteinExistence type="evidence at protein level"/>
<keyword id="KW-0025">Alternative splicing</keyword>
<keyword id="KW-0489">Methyltransferase</keyword>
<keyword id="KW-1185">Reference proteome</keyword>
<keyword id="KW-0949">S-adenosyl-L-methionine</keyword>
<keyword id="KW-0808">Transferase</keyword>
<organism>
    <name type="scientific">Arabidopsis thaliana</name>
    <name type="common">Mouse-ear cress</name>
    <dbReference type="NCBI Taxonomy" id="3702"/>
    <lineage>
        <taxon>Eukaryota</taxon>
        <taxon>Viridiplantae</taxon>
        <taxon>Streptophyta</taxon>
        <taxon>Embryophyta</taxon>
        <taxon>Tracheophyta</taxon>
        <taxon>Spermatophyta</taxon>
        <taxon>Magnoliopsida</taxon>
        <taxon>eudicotyledons</taxon>
        <taxon>Gunneridae</taxon>
        <taxon>Pentapetalae</taxon>
        <taxon>rosids</taxon>
        <taxon>malvids</taxon>
        <taxon>Brassicales</taxon>
        <taxon>Brassicaceae</taxon>
        <taxon>Camelineae</taxon>
        <taxon>Arabidopsis</taxon>
    </lineage>
</organism>
<feature type="chain" id="PRO_0000435498" description="Indole glucosinolate O-methyltransferase 4">
    <location>
        <begin position="1"/>
        <end position="373"/>
    </location>
</feature>
<feature type="active site" description="Proton acceptor" evidence="1 3">
    <location>
        <position position="278"/>
    </location>
</feature>
<feature type="binding site" evidence="1">
    <location>
        <position position="217"/>
    </location>
    <ligand>
        <name>S-adenosyl-L-homocysteine</name>
        <dbReference type="ChEBI" id="CHEBI:57856"/>
    </ligand>
</feature>
<feature type="binding site" evidence="1">
    <location>
        <position position="240"/>
    </location>
    <ligand>
        <name>S-adenosyl-L-homocysteine</name>
        <dbReference type="ChEBI" id="CHEBI:57856"/>
    </ligand>
</feature>
<feature type="binding site" evidence="1">
    <location>
        <position position="260"/>
    </location>
    <ligand>
        <name>S-adenosyl-L-homocysteine</name>
        <dbReference type="ChEBI" id="CHEBI:57856"/>
    </ligand>
</feature>
<feature type="binding site" evidence="1">
    <location>
        <position position="261"/>
    </location>
    <ligand>
        <name>S-adenosyl-L-homocysteine</name>
        <dbReference type="ChEBI" id="CHEBI:57856"/>
    </ligand>
</feature>
<feature type="binding site" evidence="1">
    <location>
        <position position="274"/>
    </location>
    <ligand>
        <name>S-adenosyl-L-homocysteine</name>
        <dbReference type="ChEBI" id="CHEBI:57856"/>
    </ligand>
</feature>
<feature type="splice variant" id="VSP_058103" description="In isoform 2.">
    <original>KRILHDWTDEDCVKILKNCWKSL</original>
    <variation>KVSSIELITYMFWKFIHGTRTLY</variation>
    <location>
        <begin position="274"/>
        <end position="296"/>
    </location>
</feature>
<feature type="splice variant" id="VSP_058104" description="In isoform 2.">
    <location>
        <begin position="297"/>
        <end position="373"/>
    </location>
</feature>
<feature type="sequence conflict" description="In Ref. 5; AAM67269." evidence="6" ref="5">
    <original>E</original>
    <variation>V</variation>
    <location>
        <position position="107"/>
    </location>
</feature>
<feature type="sequence conflict" description="In Ref. 5; AAM67269." evidence="6" ref="5">
    <original>E</original>
    <variation>D</variation>
    <location>
        <position position="117"/>
    </location>
</feature>
<feature type="sequence conflict" description="In Ref. 5; AAM67269." evidence="6" ref="5">
    <original>G</original>
    <variation>D</variation>
    <location>
        <position position="209"/>
    </location>
</feature>
<feature type="sequence conflict" description="In Ref. 5; AAM67269." evidence="6" ref="5">
    <original>A</original>
    <variation>T</variation>
    <location>
        <position position="228"/>
    </location>
</feature>
<feature type="sequence conflict" description="In Ref. 5; AAM67269." evidence="6" ref="5">
    <original>V</original>
    <variation>I</variation>
    <location>
        <position position="265"/>
    </location>
</feature>
<feature type="sequence conflict" description="In Ref. 5; AAM67269." evidence="6" ref="5">
    <original>K</original>
    <variation>N</variation>
    <location>
        <position position="290"/>
    </location>
</feature>
<feature type="sequence conflict" description="In Ref. 5; AAM67269." evidence="6" ref="5">
    <original>S</original>
    <variation>N</variation>
    <location>
        <position position="299"/>
    </location>
</feature>
<feature type="sequence conflict" description="In Ref. 3; BAE99169." evidence="6" ref="3">
    <original>D</original>
    <variation>V</variation>
    <location>
        <position position="327"/>
    </location>
</feature>